<accession>Q96HE9</accession>
<accession>Q9NUZ7</accession>
<accession>Q9NXE9</accession>
<gene>
    <name type="primary">PRR11</name>
</gene>
<reference key="1">
    <citation type="journal article" date="2004" name="Nat. Genet.">
        <title>Complete sequencing and characterization of 21,243 full-length human cDNAs.</title>
        <authorList>
            <person name="Ota T."/>
            <person name="Suzuki Y."/>
            <person name="Nishikawa T."/>
            <person name="Otsuki T."/>
            <person name="Sugiyama T."/>
            <person name="Irie R."/>
            <person name="Wakamatsu A."/>
            <person name="Hayashi K."/>
            <person name="Sato H."/>
            <person name="Nagai K."/>
            <person name="Kimura K."/>
            <person name="Makita H."/>
            <person name="Sekine M."/>
            <person name="Obayashi M."/>
            <person name="Nishi T."/>
            <person name="Shibahara T."/>
            <person name="Tanaka T."/>
            <person name="Ishii S."/>
            <person name="Yamamoto J."/>
            <person name="Saito K."/>
            <person name="Kawai Y."/>
            <person name="Isono Y."/>
            <person name="Nakamura Y."/>
            <person name="Nagahari K."/>
            <person name="Murakami K."/>
            <person name="Yasuda T."/>
            <person name="Iwayanagi T."/>
            <person name="Wagatsuma M."/>
            <person name="Shiratori A."/>
            <person name="Sudo H."/>
            <person name="Hosoiri T."/>
            <person name="Kaku Y."/>
            <person name="Kodaira H."/>
            <person name="Kondo H."/>
            <person name="Sugawara M."/>
            <person name="Takahashi M."/>
            <person name="Kanda K."/>
            <person name="Yokoi T."/>
            <person name="Furuya T."/>
            <person name="Kikkawa E."/>
            <person name="Omura Y."/>
            <person name="Abe K."/>
            <person name="Kamihara K."/>
            <person name="Katsuta N."/>
            <person name="Sato K."/>
            <person name="Tanikawa M."/>
            <person name="Yamazaki M."/>
            <person name="Ninomiya K."/>
            <person name="Ishibashi T."/>
            <person name="Yamashita H."/>
            <person name="Murakawa K."/>
            <person name="Fujimori K."/>
            <person name="Tanai H."/>
            <person name="Kimata M."/>
            <person name="Watanabe M."/>
            <person name="Hiraoka S."/>
            <person name="Chiba Y."/>
            <person name="Ishida S."/>
            <person name="Ono Y."/>
            <person name="Takiguchi S."/>
            <person name="Watanabe S."/>
            <person name="Yosida M."/>
            <person name="Hotuta T."/>
            <person name="Kusano J."/>
            <person name="Kanehori K."/>
            <person name="Takahashi-Fujii A."/>
            <person name="Hara H."/>
            <person name="Tanase T.-O."/>
            <person name="Nomura Y."/>
            <person name="Togiya S."/>
            <person name="Komai F."/>
            <person name="Hara R."/>
            <person name="Takeuchi K."/>
            <person name="Arita M."/>
            <person name="Imose N."/>
            <person name="Musashino K."/>
            <person name="Yuuki H."/>
            <person name="Oshima A."/>
            <person name="Sasaki N."/>
            <person name="Aotsuka S."/>
            <person name="Yoshikawa Y."/>
            <person name="Matsunawa H."/>
            <person name="Ichihara T."/>
            <person name="Shiohata N."/>
            <person name="Sano S."/>
            <person name="Moriya S."/>
            <person name="Momiyama H."/>
            <person name="Satoh N."/>
            <person name="Takami S."/>
            <person name="Terashima Y."/>
            <person name="Suzuki O."/>
            <person name="Nakagawa S."/>
            <person name="Senoh A."/>
            <person name="Mizoguchi H."/>
            <person name="Goto Y."/>
            <person name="Shimizu F."/>
            <person name="Wakebe H."/>
            <person name="Hishigaki H."/>
            <person name="Watanabe T."/>
            <person name="Sugiyama A."/>
            <person name="Takemoto M."/>
            <person name="Kawakami B."/>
            <person name="Yamazaki M."/>
            <person name="Watanabe K."/>
            <person name="Kumagai A."/>
            <person name="Itakura S."/>
            <person name="Fukuzumi Y."/>
            <person name="Fujimori Y."/>
            <person name="Komiyama M."/>
            <person name="Tashiro H."/>
            <person name="Tanigami A."/>
            <person name="Fujiwara T."/>
            <person name="Ono T."/>
            <person name="Yamada K."/>
            <person name="Fujii Y."/>
            <person name="Ozaki K."/>
            <person name="Hirao M."/>
            <person name="Ohmori Y."/>
            <person name="Kawabata A."/>
            <person name="Hikiji T."/>
            <person name="Kobatake N."/>
            <person name="Inagaki H."/>
            <person name="Ikema Y."/>
            <person name="Okamoto S."/>
            <person name="Okitani R."/>
            <person name="Kawakami T."/>
            <person name="Noguchi S."/>
            <person name="Itoh T."/>
            <person name="Shigeta K."/>
            <person name="Senba T."/>
            <person name="Matsumura K."/>
            <person name="Nakajima Y."/>
            <person name="Mizuno T."/>
            <person name="Morinaga M."/>
            <person name="Sasaki M."/>
            <person name="Togashi T."/>
            <person name="Oyama M."/>
            <person name="Hata H."/>
            <person name="Watanabe M."/>
            <person name="Komatsu T."/>
            <person name="Mizushima-Sugano J."/>
            <person name="Satoh T."/>
            <person name="Shirai Y."/>
            <person name="Takahashi Y."/>
            <person name="Nakagawa K."/>
            <person name="Okumura K."/>
            <person name="Nagase T."/>
            <person name="Nomura N."/>
            <person name="Kikuchi H."/>
            <person name="Masuho Y."/>
            <person name="Yamashita R."/>
            <person name="Nakai K."/>
            <person name="Yada T."/>
            <person name="Nakamura Y."/>
            <person name="Ohara O."/>
            <person name="Isogai T."/>
            <person name="Sugano S."/>
        </authorList>
    </citation>
    <scope>NUCLEOTIDE SEQUENCE [LARGE SCALE MRNA]</scope>
    <source>
        <tissue>Placenta</tissue>
    </source>
</reference>
<reference key="2">
    <citation type="journal article" date="2004" name="Genome Res.">
        <title>The status, quality, and expansion of the NIH full-length cDNA project: the Mammalian Gene Collection (MGC).</title>
        <authorList>
            <consortium name="The MGC Project Team"/>
        </authorList>
    </citation>
    <scope>NUCLEOTIDE SEQUENCE [LARGE SCALE MRNA]</scope>
    <source>
        <tissue>Eye</tissue>
    </source>
</reference>
<reference key="3">
    <citation type="journal article" date="2006" name="Cell">
        <title>Global, in vivo, and site-specific phosphorylation dynamics in signaling networks.</title>
        <authorList>
            <person name="Olsen J.V."/>
            <person name="Blagoev B."/>
            <person name="Gnad F."/>
            <person name="Macek B."/>
            <person name="Kumar C."/>
            <person name="Mortensen P."/>
            <person name="Mann M."/>
        </authorList>
    </citation>
    <scope>PHOSPHORYLATION [LARGE SCALE ANALYSIS] AT SER-40</scope>
    <scope>IDENTIFICATION BY MASS SPECTROMETRY [LARGE SCALE ANALYSIS]</scope>
    <source>
        <tissue>Cervix carcinoma</tissue>
    </source>
</reference>
<reference key="4">
    <citation type="journal article" date="2008" name="Proc. Natl. Acad. Sci. U.S.A.">
        <title>A quantitative atlas of mitotic phosphorylation.</title>
        <authorList>
            <person name="Dephoure N."/>
            <person name="Zhou C."/>
            <person name="Villen J."/>
            <person name="Beausoleil S.A."/>
            <person name="Bakalarski C.E."/>
            <person name="Elledge S.J."/>
            <person name="Gygi S.P."/>
        </authorList>
    </citation>
    <scope>PHOSPHORYLATION [LARGE SCALE ANALYSIS] AT THR-287; SER-344; THR-346 AND THR-348</scope>
    <scope>IDENTIFICATION BY MASS SPECTROMETRY [LARGE SCALE ANALYSIS]</scope>
    <source>
        <tissue>Cervix carcinoma</tissue>
    </source>
</reference>
<reference key="5">
    <citation type="journal article" date="2009" name="Sci. Signal.">
        <title>Quantitative phosphoproteomic analysis of T cell receptor signaling reveals system-wide modulation of protein-protein interactions.</title>
        <authorList>
            <person name="Mayya V."/>
            <person name="Lundgren D.H."/>
            <person name="Hwang S.-I."/>
            <person name="Rezaul K."/>
            <person name="Wu L."/>
            <person name="Eng J.K."/>
            <person name="Rodionov V."/>
            <person name="Han D.K."/>
        </authorList>
    </citation>
    <scope>IDENTIFICATION BY MASS SPECTROMETRY [LARGE SCALE ANALYSIS]</scope>
    <source>
        <tissue>Leukemic T-cell</tissue>
    </source>
</reference>
<reference key="6">
    <citation type="journal article" date="2010" name="Sci. Signal.">
        <title>Quantitative phosphoproteomics reveals widespread full phosphorylation site occupancy during mitosis.</title>
        <authorList>
            <person name="Olsen J.V."/>
            <person name="Vermeulen M."/>
            <person name="Santamaria A."/>
            <person name="Kumar C."/>
            <person name="Miller M.L."/>
            <person name="Jensen L.J."/>
            <person name="Gnad F."/>
            <person name="Cox J."/>
            <person name="Jensen T.S."/>
            <person name="Nigg E.A."/>
            <person name="Brunak S."/>
            <person name="Mann M."/>
        </authorList>
    </citation>
    <scope>PHOSPHORYLATION [LARGE SCALE ANALYSIS] AT SER-40 AND THR-287</scope>
    <scope>IDENTIFICATION BY MASS SPECTROMETRY [LARGE SCALE ANALYSIS]</scope>
    <source>
        <tissue>Cervix carcinoma</tissue>
    </source>
</reference>
<reference key="7">
    <citation type="journal article" date="2013" name="Int. J. Biochem. Cell Biol.">
        <title>PRR11 is a novel gene implicated in cell cycle progression and lung cancer.</title>
        <authorList>
            <person name="Ji Y."/>
            <person name="Xie M."/>
            <person name="Lan H."/>
            <person name="Zhang Y."/>
            <person name="Long Y."/>
            <person name="Weng H."/>
            <person name="Li D."/>
            <person name="Cai W."/>
            <person name="Zhu H."/>
            <person name="Niu Y."/>
            <person name="Yang Z."/>
            <person name="Zhang C."/>
            <person name="Song F."/>
            <person name="Bu Y."/>
        </authorList>
    </citation>
    <scope>TISSUE SPECIFICITY</scope>
    <scope>INDUCTION</scope>
    <scope>FUNCTION</scope>
    <scope>SUBCELLULAR LOCATION</scope>
</reference>
<reference key="8">
    <citation type="journal article" date="2013" name="J. Proteome Res.">
        <title>Toward a comprehensive characterization of a human cancer cell phosphoproteome.</title>
        <authorList>
            <person name="Zhou H."/>
            <person name="Di Palma S."/>
            <person name="Preisinger C."/>
            <person name="Peng M."/>
            <person name="Polat A.N."/>
            <person name="Heck A.J."/>
            <person name="Mohammed S."/>
        </authorList>
    </citation>
    <scope>PHOSPHORYLATION [LARGE SCALE ANALYSIS] AT THR-33; SER-40; THR-287 AND SER-291</scope>
    <scope>IDENTIFICATION BY MASS SPECTROMETRY [LARGE SCALE ANALYSIS]</scope>
    <source>
        <tissue>Cervix carcinoma</tissue>
        <tissue>Erythroleukemia</tissue>
    </source>
</reference>
<reference key="9">
    <citation type="journal article" date="2013" name="Mol. Cell. Proteomics">
        <title>Global subcellular characterisation of protein degradation using quantitative proteomics.</title>
        <authorList>
            <person name="Larance M."/>
            <person name="Ahmad Y."/>
            <person name="Kirkwood K.J."/>
            <person name="Ly T."/>
            <person name="Lamond A.I."/>
        </authorList>
    </citation>
    <scope>SUBCELLULAR LOCATION</scope>
    <scope>CELL CYCLE REGULATION</scope>
    <scope>PROTEASOMAL DEGRADATION</scope>
</reference>
<organism>
    <name type="scientific">Homo sapiens</name>
    <name type="common">Human</name>
    <dbReference type="NCBI Taxonomy" id="9606"/>
    <lineage>
        <taxon>Eukaryota</taxon>
        <taxon>Metazoa</taxon>
        <taxon>Chordata</taxon>
        <taxon>Craniata</taxon>
        <taxon>Vertebrata</taxon>
        <taxon>Euteleostomi</taxon>
        <taxon>Mammalia</taxon>
        <taxon>Eutheria</taxon>
        <taxon>Euarchontoglires</taxon>
        <taxon>Primates</taxon>
        <taxon>Haplorrhini</taxon>
        <taxon>Catarrhini</taxon>
        <taxon>Hominidae</taxon>
        <taxon>Homo</taxon>
    </lineage>
</organism>
<feature type="chain" id="PRO_0000243943" description="Proline-rich protein 11">
    <location>
        <begin position="1"/>
        <end position="360"/>
    </location>
</feature>
<feature type="region of interest" description="Disordered" evidence="1">
    <location>
        <begin position="20"/>
        <end position="43"/>
    </location>
</feature>
<feature type="region of interest" description="Disordered" evidence="1">
    <location>
        <begin position="174"/>
        <end position="201"/>
    </location>
</feature>
<feature type="region of interest" description="Disordered" evidence="1">
    <location>
        <begin position="340"/>
        <end position="360"/>
    </location>
</feature>
<feature type="short sequence motif" description="Phosphodegron">
    <location>
        <begin position="285"/>
        <end position="291"/>
    </location>
</feature>
<feature type="short sequence motif" description="D-box">
    <location>
        <begin position="296"/>
        <end position="304"/>
    </location>
</feature>
<feature type="short sequence motif" description="KEN box">
    <location>
        <begin position="316"/>
        <end position="318"/>
    </location>
</feature>
<feature type="short sequence motif" description="Phosphodegron">
    <location>
        <begin position="325"/>
        <end position="330"/>
    </location>
</feature>
<feature type="compositionally biased region" description="Pro residues" evidence="1">
    <location>
        <begin position="175"/>
        <end position="201"/>
    </location>
</feature>
<feature type="compositionally biased region" description="Low complexity" evidence="1">
    <location>
        <begin position="349"/>
        <end position="360"/>
    </location>
</feature>
<feature type="modified residue" description="Phosphothreonine" evidence="8">
    <location>
        <position position="33"/>
    </location>
</feature>
<feature type="modified residue" description="Phosphoserine" evidence="5 7 8">
    <location>
        <position position="40"/>
    </location>
</feature>
<feature type="modified residue" description="Phosphothreonine" evidence="6 7 8">
    <location>
        <position position="287"/>
    </location>
</feature>
<feature type="modified residue" description="Phosphoserine" evidence="8">
    <location>
        <position position="291"/>
    </location>
</feature>
<feature type="modified residue" description="Phosphoserine" evidence="6">
    <location>
        <position position="344"/>
    </location>
</feature>
<feature type="modified residue" description="Phosphothreonine" evidence="6">
    <location>
        <position position="346"/>
    </location>
</feature>
<feature type="modified residue" description="Phosphothreonine" evidence="6">
    <location>
        <position position="348"/>
    </location>
</feature>
<feature type="sequence conflict" description="In Ref. 1; BAA91964." evidence="4" ref="1">
    <original>S</original>
    <variation>R</variation>
    <location>
        <position position="307"/>
    </location>
</feature>
<name>PRR11_HUMAN</name>
<protein>
    <recommendedName>
        <fullName>Proline-rich protein 11</fullName>
    </recommendedName>
</protein>
<sequence>MPKFKQRRRKLKAKAERLFKKKEASHFQSKLITPPPPPPSPERVGISSIDISQSRSWLTSSWNFNFPNIRDAIKLWTNRVWSIYSWCQNCITQSLEVLKDTIFPSRICHRELYSVKQQFCILESKLCKLQEALKTISESSSCPSCGQTCHMSGKLTNVPACVLITPGDSKAVLPPTLPQPASHFPPPPPPPPLPPPPPPLAPVLLRKPSLAKALQAGPLKKDGPMQITVKDLLTVKLKKTQSLDEKRKLIPSPKARNPLVTVSDLQHVTLKPNSKVLSTRVTNVLITPGKSQMDLRKLLRKVDVERSPGGTPLTNKENMETGTGLTPVMTQALRRKFQLAHPRSPTPTLPLSTSSFDEQN</sequence>
<proteinExistence type="evidence at protein level"/>
<dbReference type="EMBL" id="AK000296">
    <property type="protein sequence ID" value="BAA91064.1"/>
    <property type="status" value="ALT_INIT"/>
    <property type="molecule type" value="mRNA"/>
</dbReference>
<dbReference type="EMBL" id="AK001891">
    <property type="protein sequence ID" value="BAA91964.1"/>
    <property type="molecule type" value="mRNA"/>
</dbReference>
<dbReference type="EMBL" id="BC008669">
    <property type="protein sequence ID" value="AAH08669.1"/>
    <property type="molecule type" value="mRNA"/>
</dbReference>
<dbReference type="CCDS" id="CCDS11614.1"/>
<dbReference type="RefSeq" id="NP_060774.2">
    <property type="nucleotide sequence ID" value="NM_018304.4"/>
</dbReference>
<dbReference type="RefSeq" id="XP_024306596.1">
    <property type="nucleotide sequence ID" value="XM_024450828.2"/>
</dbReference>
<dbReference type="RefSeq" id="XP_047292343.1">
    <property type="nucleotide sequence ID" value="XM_047436387.1"/>
</dbReference>
<dbReference type="RefSeq" id="XP_054172614.1">
    <property type="nucleotide sequence ID" value="XM_054316639.1"/>
</dbReference>
<dbReference type="RefSeq" id="XP_054172615.1">
    <property type="nucleotide sequence ID" value="XM_054316640.1"/>
</dbReference>
<dbReference type="SMR" id="Q96HE9"/>
<dbReference type="BioGRID" id="120888">
    <property type="interactions" value="139"/>
</dbReference>
<dbReference type="FunCoup" id="Q96HE9">
    <property type="interactions" value="1310"/>
</dbReference>
<dbReference type="IntAct" id="Q96HE9">
    <property type="interactions" value="82"/>
</dbReference>
<dbReference type="MINT" id="Q96HE9"/>
<dbReference type="STRING" id="9606.ENSP00000262293"/>
<dbReference type="GlyGen" id="Q96HE9">
    <property type="glycosylation" value="1 site, 1 O-linked glycan (1 site)"/>
</dbReference>
<dbReference type="iPTMnet" id="Q96HE9"/>
<dbReference type="PhosphoSitePlus" id="Q96HE9"/>
<dbReference type="BioMuta" id="PRR11"/>
<dbReference type="DMDM" id="74731920"/>
<dbReference type="jPOST" id="Q96HE9"/>
<dbReference type="MassIVE" id="Q96HE9"/>
<dbReference type="PaxDb" id="9606-ENSP00000262293"/>
<dbReference type="PeptideAtlas" id="Q96HE9"/>
<dbReference type="ProteomicsDB" id="76741"/>
<dbReference type="Pumba" id="Q96HE9"/>
<dbReference type="Antibodypedia" id="18470">
    <property type="antibodies" value="228 antibodies from 19 providers"/>
</dbReference>
<dbReference type="DNASU" id="55771"/>
<dbReference type="Ensembl" id="ENST00000262293.9">
    <property type="protein sequence ID" value="ENSP00000262293.5"/>
    <property type="gene ID" value="ENSG00000068489.13"/>
</dbReference>
<dbReference type="Ensembl" id="ENST00000578542.5">
    <property type="protein sequence ID" value="ENSP00000464171.1"/>
    <property type="gene ID" value="ENSG00000068489.13"/>
</dbReference>
<dbReference type="Ensembl" id="ENST00000580177.5">
    <property type="protein sequence ID" value="ENSP00000463733.1"/>
    <property type="gene ID" value="ENSG00000068489.13"/>
</dbReference>
<dbReference type="Ensembl" id="ENST00000614081.1">
    <property type="protein sequence ID" value="ENSP00000481852.1"/>
    <property type="gene ID" value="ENSG00000068489.13"/>
</dbReference>
<dbReference type="GeneID" id="55771"/>
<dbReference type="KEGG" id="hsa:55771"/>
<dbReference type="MANE-Select" id="ENST00000262293.9">
    <property type="protein sequence ID" value="ENSP00000262293.5"/>
    <property type="RefSeq nucleotide sequence ID" value="NM_018304.4"/>
    <property type="RefSeq protein sequence ID" value="NP_060774.2"/>
</dbReference>
<dbReference type="UCSC" id="uc002ixf.3">
    <property type="organism name" value="human"/>
</dbReference>
<dbReference type="AGR" id="HGNC:25619"/>
<dbReference type="CTD" id="55771"/>
<dbReference type="DisGeNET" id="55771"/>
<dbReference type="GeneCards" id="PRR11"/>
<dbReference type="HGNC" id="HGNC:25619">
    <property type="gene designation" value="PRR11"/>
</dbReference>
<dbReference type="HPA" id="ENSG00000068489">
    <property type="expression patterns" value="Tissue enhanced (bone marrow, lymphoid tissue)"/>
</dbReference>
<dbReference type="MIM" id="615920">
    <property type="type" value="gene"/>
</dbReference>
<dbReference type="neXtProt" id="NX_Q96HE9"/>
<dbReference type="OpenTargets" id="ENSG00000068489"/>
<dbReference type="PharmGKB" id="PA142671131"/>
<dbReference type="VEuPathDB" id="HostDB:ENSG00000068489"/>
<dbReference type="eggNOG" id="ENOG502RZVF">
    <property type="taxonomic scope" value="Eukaryota"/>
</dbReference>
<dbReference type="GeneTree" id="ENSGT00510000046704"/>
<dbReference type="HOGENOM" id="CLU_055832_0_0_1"/>
<dbReference type="InParanoid" id="Q96HE9"/>
<dbReference type="OMA" id="RVWSIYN"/>
<dbReference type="OrthoDB" id="10066480at2759"/>
<dbReference type="PAN-GO" id="Q96HE9">
    <property type="GO annotations" value="2 GO annotations based on evolutionary models"/>
</dbReference>
<dbReference type="PhylomeDB" id="Q96HE9"/>
<dbReference type="TreeFam" id="TF333428"/>
<dbReference type="PathwayCommons" id="Q96HE9"/>
<dbReference type="SignaLink" id="Q96HE9"/>
<dbReference type="BioGRID-ORCS" id="55771">
    <property type="hits" value="15 hits in 1156 CRISPR screens"/>
</dbReference>
<dbReference type="ChiTaRS" id="PRR11">
    <property type="organism name" value="human"/>
</dbReference>
<dbReference type="GenomeRNAi" id="55771"/>
<dbReference type="Pharos" id="Q96HE9">
    <property type="development level" value="Tbio"/>
</dbReference>
<dbReference type="PRO" id="PR:Q96HE9"/>
<dbReference type="Proteomes" id="UP000005640">
    <property type="component" value="Chromosome 17"/>
</dbReference>
<dbReference type="RNAct" id="Q96HE9">
    <property type="molecule type" value="protein"/>
</dbReference>
<dbReference type="Bgee" id="ENSG00000068489">
    <property type="expression patterns" value="Expressed in endothelial cell and 211 other cell types or tissues"/>
</dbReference>
<dbReference type="ExpressionAtlas" id="Q96HE9">
    <property type="expression patterns" value="baseline and differential"/>
</dbReference>
<dbReference type="GO" id="GO:0005737">
    <property type="term" value="C:cytoplasm"/>
    <property type="evidence" value="ECO:0000314"/>
    <property type="project" value="UniProtKB"/>
</dbReference>
<dbReference type="GO" id="GO:0016020">
    <property type="term" value="C:membrane"/>
    <property type="evidence" value="ECO:0007005"/>
    <property type="project" value="UniProtKB"/>
</dbReference>
<dbReference type="GO" id="GO:0005634">
    <property type="term" value="C:nucleus"/>
    <property type="evidence" value="ECO:0000314"/>
    <property type="project" value="UniProtKB"/>
</dbReference>
<dbReference type="GO" id="GO:0051726">
    <property type="term" value="P:regulation of cell cycle"/>
    <property type="evidence" value="ECO:0000314"/>
    <property type="project" value="UniProtKB"/>
</dbReference>
<dbReference type="PANTHER" id="PTHR23330">
    <property type="entry name" value="P300 TRANSCRIPTIONAL COFACTOR JMY-RELATED"/>
    <property type="match status" value="1"/>
</dbReference>
<dbReference type="PANTHER" id="PTHR23330:SF9">
    <property type="entry name" value="PROLINE-RICH PROTEIN 11"/>
    <property type="match status" value="1"/>
</dbReference>
<evidence type="ECO:0000256" key="1">
    <source>
        <dbReference type="SAM" id="MobiDB-lite"/>
    </source>
</evidence>
<evidence type="ECO:0000269" key="2">
    <source>
    </source>
</evidence>
<evidence type="ECO:0000269" key="3">
    <source>
    </source>
</evidence>
<evidence type="ECO:0000305" key="4"/>
<evidence type="ECO:0007744" key="5">
    <source>
    </source>
</evidence>
<evidence type="ECO:0007744" key="6">
    <source>
    </source>
</evidence>
<evidence type="ECO:0007744" key="7">
    <source>
    </source>
</evidence>
<evidence type="ECO:0007744" key="8">
    <source>
    </source>
</evidence>
<comment type="function">
    <text evidence="3">Plays a critical role in cell cycle progression.</text>
</comment>
<comment type="subcellular location">
    <subcellularLocation>
        <location evidence="2 3">Cytoplasm</location>
    </subcellularLocation>
    <subcellularLocation>
        <location evidence="3">Nucleus</location>
    </subcellularLocation>
</comment>
<comment type="tissue specificity">
    <text evidence="3">Ubiquitously expressed.</text>
</comment>
<comment type="induction">
    <text evidence="2 3">Expression increases from G1 to G2/M phase.</text>
</comment>
<comment type="PTM">
    <text evidence="4">Ubiquitinated (Probable). Rapidly degraded by the proteasome; degradation may involve FBXW7-specific phosphorylated phosphodegron motifs.</text>
</comment>
<comment type="sequence caution" evidence="4">
    <conflict type="erroneous initiation">
        <sequence resource="EMBL-CDS" id="BAA91064"/>
    </conflict>
    <text>Truncated N-terminus.</text>
</comment>
<keyword id="KW-0963">Cytoplasm</keyword>
<keyword id="KW-0539">Nucleus</keyword>
<keyword id="KW-0597">Phosphoprotein</keyword>
<keyword id="KW-1267">Proteomics identification</keyword>
<keyword id="KW-1185">Reference proteome</keyword>
<keyword id="KW-0832">Ubl conjugation</keyword>